<name>SU11A_COCP7</name>
<proteinExistence type="inferred from homology"/>
<comment type="function">
    <text evidence="1">Secreted subtilisin-like serine protease with keratinolytic activity that contributes to pathogenicity.</text>
</comment>
<comment type="subcellular location">
    <subcellularLocation>
        <location evidence="1">Secreted</location>
    </subcellularLocation>
</comment>
<comment type="similarity">
    <text evidence="4">Belongs to the peptidase S8 family.</text>
</comment>
<protein>
    <recommendedName>
        <fullName>Subtilisin-like protease CPC735_035780</fullName>
        <ecNumber>3.4.21.-</ecNumber>
    </recommendedName>
</protein>
<feature type="signal peptide" evidence="2">
    <location>
        <begin position="1"/>
        <end position="19"/>
    </location>
</feature>
<feature type="propeptide" id="PRO_0000407002" evidence="1">
    <location>
        <begin position="20"/>
        <end position="117"/>
    </location>
</feature>
<feature type="chain" id="PRO_0000407003" description="Subtilisin-like protease CPC735_035780">
    <location>
        <begin position="118"/>
        <end position="403"/>
    </location>
</feature>
<feature type="domain" description="Inhibitor I9" evidence="2">
    <location>
        <begin position="35"/>
        <end position="116"/>
    </location>
</feature>
<feature type="domain" description="Peptidase S8" evidence="3">
    <location>
        <begin position="127"/>
        <end position="403"/>
    </location>
</feature>
<feature type="active site" description="Charge relay system" evidence="3">
    <location>
        <position position="159"/>
    </location>
</feature>
<feature type="active site" description="Charge relay system" evidence="3">
    <location>
        <position position="190"/>
    </location>
</feature>
<feature type="active site" description="Charge relay system" evidence="3">
    <location>
        <position position="349"/>
    </location>
</feature>
<feature type="glycosylation site" description="N-linked (GlcNAc...) asparagine" evidence="2">
    <location>
        <position position="233"/>
    </location>
</feature>
<feature type="glycosylation site" description="N-linked (GlcNAc...) asparagine" evidence="2">
    <location>
        <position position="251"/>
    </location>
</feature>
<feature type="glycosylation site" description="N-linked (GlcNAc...) asparagine" evidence="2">
    <location>
        <position position="399"/>
    </location>
</feature>
<reference key="1">
    <citation type="journal article" date="2009" name="Genome Res.">
        <title>Comparative genomic analyses of the human fungal pathogens Coccidioides and their relatives.</title>
        <authorList>
            <person name="Sharpton T.J."/>
            <person name="Stajich J.E."/>
            <person name="Rounsley S.D."/>
            <person name="Gardner M.J."/>
            <person name="Wortman J.R."/>
            <person name="Jordar V.S."/>
            <person name="Maiti R."/>
            <person name="Kodira C.D."/>
            <person name="Neafsey D.E."/>
            <person name="Zeng Q."/>
            <person name="Hung C.-Y."/>
            <person name="McMahan C."/>
            <person name="Muszewska A."/>
            <person name="Grynberg M."/>
            <person name="Mandel M.A."/>
            <person name="Kellner E.M."/>
            <person name="Barker B.M."/>
            <person name="Galgiani J.N."/>
            <person name="Orbach M.J."/>
            <person name="Kirkland T.N."/>
            <person name="Cole G.T."/>
            <person name="Henn M.R."/>
            <person name="Birren B.W."/>
            <person name="Taylor J.W."/>
        </authorList>
    </citation>
    <scope>NUCLEOTIDE SEQUENCE [LARGE SCALE GENOMIC DNA]</scope>
    <source>
        <strain>C735</strain>
    </source>
</reference>
<keyword id="KW-0325">Glycoprotein</keyword>
<keyword id="KW-0378">Hydrolase</keyword>
<keyword id="KW-0645">Protease</keyword>
<keyword id="KW-0964">Secreted</keyword>
<keyword id="KW-0720">Serine protease</keyword>
<keyword id="KW-0732">Signal</keyword>
<keyword id="KW-0843">Virulence</keyword>
<keyword id="KW-0865">Zymogen</keyword>
<evidence type="ECO:0000250" key="1"/>
<evidence type="ECO:0000255" key="2"/>
<evidence type="ECO:0000255" key="3">
    <source>
        <dbReference type="PROSITE-ProRule" id="PRU01240"/>
    </source>
</evidence>
<evidence type="ECO:0000305" key="4"/>
<sequence>MSIMKIATLFFAALSAVEAAKLLTPSDKRDIVPDSYIVVMKDNVSPLKFDSHMSWATNVHHANLARQGSTATGGLKHVYRIDGWQGYSGSFARETIDRILENDDVDYVEPDRRVHLTALTTQPNAPSWGLGRISHRNNGNSNFVYDDRAGEGITFYGVDTGIDINHPDFGGRAVWGTNTAGGSDSDGHGHGTHTAGTVAGASYGIAKKAKLVAVKVLSEGGTGQWSGIIEGINWSVNHARANNALGKAVMNMSLGGRLSTSVNQATTRAQRAGIFIAVAAGNEDPSVQSDAANTSPASAEDVCTVAASTEQDGRASFSNWGSMVEIYAPGTNIVSTTPGGNTGKMSGTSMAAPHVAGVGAAIMASEGISPSEVCSRLVEIGLEQISNPGSGTTNKLLYNNSGR</sequence>
<accession>C5P1W9</accession>
<gene>
    <name type="ORF">CPC735_035780</name>
</gene>
<dbReference type="EC" id="3.4.21.-"/>
<dbReference type="EMBL" id="ACFW01000012">
    <property type="protein sequence ID" value="EER28872.1"/>
    <property type="molecule type" value="Genomic_DNA"/>
</dbReference>
<dbReference type="RefSeq" id="XP_003071017.1">
    <property type="nucleotide sequence ID" value="XM_003070971.1"/>
</dbReference>
<dbReference type="SMR" id="C5P1W9"/>
<dbReference type="VEuPathDB" id="FungiDB:CPC735_035780"/>
<dbReference type="HOGENOM" id="CLU_011263_1_3_1"/>
<dbReference type="OrthoDB" id="206201at2759"/>
<dbReference type="Proteomes" id="UP000009084">
    <property type="component" value="Unassembled WGS sequence"/>
</dbReference>
<dbReference type="GO" id="GO:0005576">
    <property type="term" value="C:extracellular region"/>
    <property type="evidence" value="ECO:0007669"/>
    <property type="project" value="UniProtKB-SubCell"/>
</dbReference>
<dbReference type="GO" id="GO:0004252">
    <property type="term" value="F:serine-type endopeptidase activity"/>
    <property type="evidence" value="ECO:0007669"/>
    <property type="project" value="InterPro"/>
</dbReference>
<dbReference type="GO" id="GO:0006508">
    <property type="term" value="P:proteolysis"/>
    <property type="evidence" value="ECO:0007669"/>
    <property type="project" value="UniProtKB-KW"/>
</dbReference>
<dbReference type="CDD" id="cd04077">
    <property type="entry name" value="Peptidases_S8_PCSK9_ProteinaseK_like"/>
    <property type="match status" value="1"/>
</dbReference>
<dbReference type="FunFam" id="3.40.50.200:FF:000014">
    <property type="entry name" value="Proteinase K"/>
    <property type="match status" value="1"/>
</dbReference>
<dbReference type="Gene3D" id="3.30.70.80">
    <property type="entry name" value="Peptidase S8 propeptide/proteinase inhibitor I9"/>
    <property type="match status" value="1"/>
</dbReference>
<dbReference type="Gene3D" id="3.40.50.200">
    <property type="entry name" value="Peptidase S8/S53 domain"/>
    <property type="match status" value="1"/>
</dbReference>
<dbReference type="InterPro" id="IPR034193">
    <property type="entry name" value="PCSK9_ProteinaseK-like"/>
</dbReference>
<dbReference type="InterPro" id="IPR000209">
    <property type="entry name" value="Peptidase_S8/S53_dom"/>
</dbReference>
<dbReference type="InterPro" id="IPR036852">
    <property type="entry name" value="Peptidase_S8/S53_dom_sf"/>
</dbReference>
<dbReference type="InterPro" id="IPR023828">
    <property type="entry name" value="Peptidase_S8_Ser-AS"/>
</dbReference>
<dbReference type="InterPro" id="IPR050131">
    <property type="entry name" value="Peptidase_S8_subtilisin-like"/>
</dbReference>
<dbReference type="InterPro" id="IPR015500">
    <property type="entry name" value="Peptidase_S8_subtilisin-rel"/>
</dbReference>
<dbReference type="InterPro" id="IPR010259">
    <property type="entry name" value="S8pro/Inhibitor_I9"/>
</dbReference>
<dbReference type="InterPro" id="IPR037045">
    <property type="entry name" value="S8pro/Inhibitor_I9_sf"/>
</dbReference>
<dbReference type="PANTHER" id="PTHR43806:SF11">
    <property type="entry name" value="CEREVISIN-RELATED"/>
    <property type="match status" value="1"/>
</dbReference>
<dbReference type="PANTHER" id="PTHR43806">
    <property type="entry name" value="PEPTIDASE S8"/>
    <property type="match status" value="1"/>
</dbReference>
<dbReference type="Pfam" id="PF05922">
    <property type="entry name" value="Inhibitor_I9"/>
    <property type="match status" value="1"/>
</dbReference>
<dbReference type="Pfam" id="PF00082">
    <property type="entry name" value="Peptidase_S8"/>
    <property type="match status" value="1"/>
</dbReference>
<dbReference type="PRINTS" id="PR00723">
    <property type="entry name" value="SUBTILISIN"/>
</dbReference>
<dbReference type="SUPFAM" id="SSF54897">
    <property type="entry name" value="Protease propeptides/inhibitors"/>
    <property type="match status" value="1"/>
</dbReference>
<dbReference type="SUPFAM" id="SSF52743">
    <property type="entry name" value="Subtilisin-like"/>
    <property type="match status" value="1"/>
</dbReference>
<dbReference type="PROSITE" id="PS51892">
    <property type="entry name" value="SUBTILASE"/>
    <property type="match status" value="1"/>
</dbReference>
<dbReference type="PROSITE" id="PS00138">
    <property type="entry name" value="SUBTILASE_SER"/>
    <property type="match status" value="1"/>
</dbReference>
<organism>
    <name type="scientific">Coccidioides posadasii (strain C735)</name>
    <name type="common">Valley fever fungus</name>
    <dbReference type="NCBI Taxonomy" id="222929"/>
    <lineage>
        <taxon>Eukaryota</taxon>
        <taxon>Fungi</taxon>
        <taxon>Dikarya</taxon>
        <taxon>Ascomycota</taxon>
        <taxon>Pezizomycotina</taxon>
        <taxon>Eurotiomycetes</taxon>
        <taxon>Eurotiomycetidae</taxon>
        <taxon>Onygenales</taxon>
        <taxon>Onygenaceae</taxon>
        <taxon>Coccidioides</taxon>
    </lineage>
</organism>